<sequence>MREILHIQGGQCGNQIGAKFWEVICGEHGIDQTGQSCGDTDLQLERINVYFNEASGGKYVPRAVLMDLEPGTMDSLRSGPFGQIFRPDNFVFGQSGAGNNWAKGHYTEGAELIDSVLDVVRKEAENCDCLQGFQVCHSLGGGTGSGMGTLLISKIREEYPDRMMMTFSVFPSPKVSDTVVEPYNATLSVHQLVENADECMVLDNEALYDICFRTLKLANPTFGDLNHLISATMSGVTCCLRFPGQLNSDLRKLAVNLIPFPRLHFFMVGFAPLTSRGSQQYSALSVPELTQQMWDAKNMMCAADPRHGRYLTASAVFRGKMSTKEVDEQMMNVQNKNSSYFVEWIPNNVKSSVCDIAPTGLKMASTFIGNSTSIQEMFRRVSEQFTAMFRRKAFLHWYTGEGMDEMEFTEAESNMNDLVAEYQQYQDATVGEEEYEEDEEEEEA</sequence>
<reference key="1">
    <citation type="journal article" date="1992" name="Plant Cell">
        <title>The small genome of Arabidopsis contains at least nine expressed beta-tubulin genes.</title>
        <authorList>
            <person name="Snustad D.P."/>
            <person name="Haas N.A."/>
            <person name="Kopczak S.D."/>
            <person name="Silflow C.D."/>
        </authorList>
    </citation>
    <scope>NUCLEOTIDE SEQUENCE [GENOMIC DNA]</scope>
    <source>
        <strain>cv. Columbia</strain>
    </source>
</reference>
<reference key="2">
    <citation type="journal article" date="1999" name="Nature">
        <title>Sequence and analysis of chromosome 4 of the plant Arabidopsis thaliana.</title>
        <authorList>
            <person name="Mayer K.F.X."/>
            <person name="Schueller C."/>
            <person name="Wambutt R."/>
            <person name="Murphy G."/>
            <person name="Volckaert G."/>
            <person name="Pohl T."/>
            <person name="Duesterhoeft A."/>
            <person name="Stiekema W."/>
            <person name="Entian K.-D."/>
            <person name="Terryn N."/>
            <person name="Harris B."/>
            <person name="Ansorge W."/>
            <person name="Brandt P."/>
            <person name="Grivell L.A."/>
            <person name="Rieger M."/>
            <person name="Weichselgartner M."/>
            <person name="de Simone V."/>
            <person name="Obermaier B."/>
            <person name="Mache R."/>
            <person name="Mueller M."/>
            <person name="Kreis M."/>
            <person name="Delseny M."/>
            <person name="Puigdomenech P."/>
            <person name="Watson M."/>
            <person name="Schmidtheini T."/>
            <person name="Reichert B."/>
            <person name="Portetelle D."/>
            <person name="Perez-Alonso M."/>
            <person name="Boutry M."/>
            <person name="Bancroft I."/>
            <person name="Vos P."/>
            <person name="Hoheisel J."/>
            <person name="Zimmermann W."/>
            <person name="Wedler H."/>
            <person name="Ridley P."/>
            <person name="Langham S.-A."/>
            <person name="McCullagh B."/>
            <person name="Bilham L."/>
            <person name="Robben J."/>
            <person name="van der Schueren J."/>
            <person name="Grymonprez B."/>
            <person name="Chuang Y.-J."/>
            <person name="Vandenbussche F."/>
            <person name="Braeken M."/>
            <person name="Weltjens I."/>
            <person name="Voet M."/>
            <person name="Bastiaens I."/>
            <person name="Aert R."/>
            <person name="Defoor E."/>
            <person name="Weitzenegger T."/>
            <person name="Bothe G."/>
            <person name="Ramsperger U."/>
            <person name="Hilbert H."/>
            <person name="Braun M."/>
            <person name="Holzer E."/>
            <person name="Brandt A."/>
            <person name="Peters S."/>
            <person name="van Staveren M."/>
            <person name="Dirkse W."/>
            <person name="Mooijman P."/>
            <person name="Klein Lankhorst R."/>
            <person name="Rose M."/>
            <person name="Hauf J."/>
            <person name="Koetter P."/>
            <person name="Berneiser S."/>
            <person name="Hempel S."/>
            <person name="Feldpausch M."/>
            <person name="Lamberth S."/>
            <person name="Van den Daele H."/>
            <person name="De Keyser A."/>
            <person name="Buysshaert C."/>
            <person name="Gielen J."/>
            <person name="Villarroel R."/>
            <person name="De Clercq R."/>
            <person name="van Montagu M."/>
            <person name="Rogers J."/>
            <person name="Cronin A."/>
            <person name="Quail M.A."/>
            <person name="Bray-Allen S."/>
            <person name="Clark L."/>
            <person name="Doggett J."/>
            <person name="Hall S."/>
            <person name="Kay M."/>
            <person name="Lennard N."/>
            <person name="McLay K."/>
            <person name="Mayes R."/>
            <person name="Pettett A."/>
            <person name="Rajandream M.A."/>
            <person name="Lyne M."/>
            <person name="Benes V."/>
            <person name="Rechmann S."/>
            <person name="Borkova D."/>
            <person name="Bloecker H."/>
            <person name="Scharfe M."/>
            <person name="Grimm M."/>
            <person name="Loehnert T.-H."/>
            <person name="Dose S."/>
            <person name="de Haan M."/>
            <person name="Maarse A.C."/>
            <person name="Schaefer M."/>
            <person name="Mueller-Auer S."/>
            <person name="Gabel C."/>
            <person name="Fuchs M."/>
            <person name="Fartmann B."/>
            <person name="Granderath K."/>
            <person name="Dauner D."/>
            <person name="Herzl A."/>
            <person name="Neumann S."/>
            <person name="Argiriou A."/>
            <person name="Vitale D."/>
            <person name="Liguori R."/>
            <person name="Piravandi E."/>
            <person name="Massenet O."/>
            <person name="Quigley F."/>
            <person name="Clabauld G."/>
            <person name="Muendlein A."/>
            <person name="Felber R."/>
            <person name="Schnabl S."/>
            <person name="Hiller R."/>
            <person name="Schmidt W."/>
            <person name="Lecharny A."/>
            <person name="Aubourg S."/>
            <person name="Chefdor F."/>
            <person name="Cooke R."/>
            <person name="Berger C."/>
            <person name="Monfort A."/>
            <person name="Casacuberta E."/>
            <person name="Gibbons T."/>
            <person name="Weber N."/>
            <person name="Vandenbol M."/>
            <person name="Bargues M."/>
            <person name="Terol J."/>
            <person name="Torres A."/>
            <person name="Perez-Perez A."/>
            <person name="Purnelle B."/>
            <person name="Bent E."/>
            <person name="Johnson S."/>
            <person name="Tacon D."/>
            <person name="Jesse T."/>
            <person name="Heijnen L."/>
            <person name="Schwarz S."/>
            <person name="Scholler P."/>
            <person name="Heber S."/>
            <person name="Francs P."/>
            <person name="Bielke C."/>
            <person name="Frishman D."/>
            <person name="Haase D."/>
            <person name="Lemcke K."/>
            <person name="Mewes H.-W."/>
            <person name="Stocker S."/>
            <person name="Zaccaria P."/>
            <person name="Bevan M."/>
            <person name="Wilson R.K."/>
            <person name="de la Bastide M."/>
            <person name="Habermann K."/>
            <person name="Parnell L."/>
            <person name="Dedhia N."/>
            <person name="Gnoj L."/>
            <person name="Schutz K."/>
            <person name="Huang E."/>
            <person name="Spiegel L."/>
            <person name="Sekhon M."/>
            <person name="Murray J."/>
            <person name="Sheet P."/>
            <person name="Cordes M."/>
            <person name="Abu-Threideh J."/>
            <person name="Stoneking T."/>
            <person name="Kalicki J."/>
            <person name="Graves T."/>
            <person name="Harmon G."/>
            <person name="Edwards J."/>
            <person name="Latreille P."/>
            <person name="Courtney L."/>
            <person name="Cloud J."/>
            <person name="Abbott A."/>
            <person name="Scott K."/>
            <person name="Johnson D."/>
            <person name="Minx P."/>
            <person name="Bentley D."/>
            <person name="Fulton B."/>
            <person name="Miller N."/>
            <person name="Greco T."/>
            <person name="Kemp K."/>
            <person name="Kramer J."/>
            <person name="Fulton L."/>
            <person name="Mardis E."/>
            <person name="Dante M."/>
            <person name="Pepin K."/>
            <person name="Hillier L.W."/>
            <person name="Nelson J."/>
            <person name="Spieth J."/>
            <person name="Ryan E."/>
            <person name="Andrews S."/>
            <person name="Geisel C."/>
            <person name="Layman D."/>
            <person name="Du H."/>
            <person name="Ali J."/>
            <person name="Berghoff A."/>
            <person name="Jones K."/>
            <person name="Drone K."/>
            <person name="Cotton M."/>
            <person name="Joshu C."/>
            <person name="Antonoiu B."/>
            <person name="Zidanic M."/>
            <person name="Strong C."/>
            <person name="Sun H."/>
            <person name="Lamar B."/>
            <person name="Yordan C."/>
            <person name="Ma P."/>
            <person name="Zhong J."/>
            <person name="Preston R."/>
            <person name="Vil D."/>
            <person name="Shekher M."/>
            <person name="Matero A."/>
            <person name="Shah R."/>
            <person name="Swaby I.K."/>
            <person name="O'Shaughnessy A."/>
            <person name="Rodriguez M."/>
            <person name="Hoffman J."/>
            <person name="Till S."/>
            <person name="Granat S."/>
            <person name="Shohdy N."/>
            <person name="Hasegawa A."/>
            <person name="Hameed A."/>
            <person name="Lodhi M."/>
            <person name="Johnson A."/>
            <person name="Chen E."/>
            <person name="Marra M.A."/>
            <person name="Martienssen R."/>
            <person name="McCombie W.R."/>
        </authorList>
    </citation>
    <scope>NUCLEOTIDE SEQUENCE [LARGE SCALE GENOMIC DNA]</scope>
    <source>
        <strain>cv. Columbia</strain>
    </source>
</reference>
<reference key="3">
    <citation type="journal article" date="2017" name="Plant J.">
        <title>Araport11: a complete reannotation of the Arabidopsis thaliana reference genome.</title>
        <authorList>
            <person name="Cheng C.Y."/>
            <person name="Krishnakumar V."/>
            <person name="Chan A.P."/>
            <person name="Thibaud-Nissen F."/>
            <person name="Schobel S."/>
            <person name="Town C.D."/>
        </authorList>
    </citation>
    <scope>GENOME REANNOTATION</scope>
    <source>
        <strain>cv. Columbia</strain>
    </source>
</reference>
<reference key="4">
    <citation type="journal article" date="2003" name="Science">
        <title>Empirical analysis of transcriptional activity in the Arabidopsis genome.</title>
        <authorList>
            <person name="Yamada K."/>
            <person name="Lim J."/>
            <person name="Dale J.M."/>
            <person name="Chen H."/>
            <person name="Shinn P."/>
            <person name="Palm C.J."/>
            <person name="Southwick A.M."/>
            <person name="Wu H.C."/>
            <person name="Kim C.J."/>
            <person name="Nguyen M."/>
            <person name="Pham P.K."/>
            <person name="Cheuk R.F."/>
            <person name="Karlin-Newmann G."/>
            <person name="Liu S.X."/>
            <person name="Lam B."/>
            <person name="Sakano H."/>
            <person name="Wu T."/>
            <person name="Yu G."/>
            <person name="Miranda M."/>
            <person name="Quach H.L."/>
            <person name="Tripp M."/>
            <person name="Chang C.H."/>
            <person name="Lee J.M."/>
            <person name="Toriumi M.J."/>
            <person name="Chan M.M."/>
            <person name="Tang C.C."/>
            <person name="Onodera C.S."/>
            <person name="Deng J.M."/>
            <person name="Akiyama K."/>
            <person name="Ansari Y."/>
            <person name="Arakawa T."/>
            <person name="Banh J."/>
            <person name="Banno F."/>
            <person name="Bowser L."/>
            <person name="Brooks S.Y."/>
            <person name="Carninci P."/>
            <person name="Chao Q."/>
            <person name="Choy N."/>
            <person name="Enju A."/>
            <person name="Goldsmith A.D."/>
            <person name="Gurjal M."/>
            <person name="Hansen N.F."/>
            <person name="Hayashizaki Y."/>
            <person name="Johnson-Hopson C."/>
            <person name="Hsuan V.W."/>
            <person name="Iida K."/>
            <person name="Karnes M."/>
            <person name="Khan S."/>
            <person name="Koesema E."/>
            <person name="Ishida J."/>
            <person name="Jiang P.X."/>
            <person name="Jones T."/>
            <person name="Kawai J."/>
            <person name="Kamiya A."/>
            <person name="Meyers C."/>
            <person name="Nakajima M."/>
            <person name="Narusaka M."/>
            <person name="Seki M."/>
            <person name="Sakurai T."/>
            <person name="Satou M."/>
            <person name="Tamse R."/>
            <person name="Vaysberg M."/>
            <person name="Wallender E.K."/>
            <person name="Wong C."/>
            <person name="Yamamura Y."/>
            <person name="Yuan S."/>
            <person name="Shinozaki K."/>
            <person name="Davis R.W."/>
            <person name="Theologis A."/>
            <person name="Ecker J.R."/>
        </authorList>
    </citation>
    <scope>NUCLEOTIDE SEQUENCE [LARGE SCALE MRNA]</scope>
    <source>
        <strain>cv. Columbia</strain>
    </source>
</reference>
<reference key="5">
    <citation type="submission" date="2002-03" db="EMBL/GenBank/DDBJ databases">
        <title>Full-length cDNA from Arabidopsis thaliana.</title>
        <authorList>
            <person name="Brover V.V."/>
            <person name="Troukhan M.E."/>
            <person name="Alexandrov N.A."/>
            <person name="Lu Y.-P."/>
            <person name="Flavell R.B."/>
            <person name="Feldmann K.A."/>
        </authorList>
    </citation>
    <scope>NUCLEOTIDE SEQUENCE [LARGE SCALE MRNA]</scope>
</reference>
<reference key="6">
    <citation type="journal article" date="2010" name="FEBS Lett.">
        <title>Crystal structure of tubulin folding cofactor A from Arabidopsis thaliana and its beta-tubulin binding characterization.</title>
        <authorList>
            <person name="Lu L."/>
            <person name="Nan J."/>
            <person name="Mi W."/>
            <person name="Li L.F."/>
            <person name="Wei C.H."/>
            <person name="Su X.D."/>
            <person name="Li Y."/>
        </authorList>
    </citation>
    <scope>INTERACTION WITH TFCA</scope>
</reference>
<name>TBB9_ARATH</name>
<keyword id="KW-0963">Cytoplasm</keyword>
<keyword id="KW-0206">Cytoskeleton</keyword>
<keyword id="KW-0342">GTP-binding</keyword>
<keyword id="KW-0460">Magnesium</keyword>
<keyword id="KW-0479">Metal-binding</keyword>
<keyword id="KW-0493">Microtubule</keyword>
<keyword id="KW-0547">Nucleotide-binding</keyword>
<keyword id="KW-1185">Reference proteome</keyword>
<comment type="function">
    <text>Tubulin is the major constituent of microtubules, a cylinder consisting of laterally associated linear protofilaments composed of alpha- and beta-tubulin heterodimers. Microtubules grow by the addition of GTP-tubulin dimers to the microtubule end, where a stabilizing cap forms. Below the cap, tubulin dimers are in GDP-bound state, owing to GTPase activity of alpha-tubulin.</text>
</comment>
<comment type="cofactor">
    <cofactor evidence="1">
        <name>Mg(2+)</name>
        <dbReference type="ChEBI" id="CHEBI:18420"/>
    </cofactor>
</comment>
<comment type="subunit">
    <text evidence="3">Dimer of alpha and beta chains. A typical microtubule is a hollow water-filled tube with an outer diameter of 25 nm and an inner diameter of 15 nM. Alpha-beta heterodimers associate head-to-tail to form protofilaments running lengthwise along the microtubule wall with the beta-tubulin subunit facing the microtubule plus end conferring a structural polarity. Microtubules usually have 13 protofilaments but different protofilament numbers can be found in some organisms and specialized cells. Interacts with TFCA.</text>
</comment>
<comment type="interaction">
    <interactant intactId="EBI-2000198">
        <id>P29517</id>
    </interactant>
    <interactant intactId="EBI-1999365">
        <id>O04350</id>
        <label>TFCA</label>
    </interactant>
    <organismsDiffer>false</organismsDiffer>
    <experiments>5</experiments>
</comment>
<comment type="subcellular location">
    <subcellularLocation>
        <location>Cytoplasm</location>
        <location>Cytoskeleton</location>
    </subcellularLocation>
</comment>
<comment type="miscellaneous">
    <text>There are nine genes coding for beta-tubulin.</text>
</comment>
<comment type="similarity">
    <text evidence="4">Belongs to the tubulin family.</text>
</comment>
<proteinExistence type="evidence at protein level"/>
<dbReference type="EMBL" id="M84706">
    <property type="protein sequence ID" value="AAA32887.1"/>
    <property type="molecule type" value="Genomic_DNA"/>
</dbReference>
<dbReference type="EMBL" id="AL080282">
    <property type="protein sequence ID" value="CAB45884.1"/>
    <property type="molecule type" value="Genomic_DNA"/>
</dbReference>
<dbReference type="EMBL" id="AL161553">
    <property type="protein sequence ID" value="CAB79089.1"/>
    <property type="molecule type" value="Genomic_DNA"/>
</dbReference>
<dbReference type="EMBL" id="CP002687">
    <property type="protein sequence ID" value="AEE84372.1"/>
    <property type="molecule type" value="Genomic_DNA"/>
</dbReference>
<dbReference type="EMBL" id="AY128337">
    <property type="protein sequence ID" value="AAM91540.1"/>
    <property type="molecule type" value="mRNA"/>
</dbReference>
<dbReference type="EMBL" id="AY087594">
    <property type="protein sequence ID" value="AAM65136.1"/>
    <property type="molecule type" value="mRNA"/>
</dbReference>
<dbReference type="PIR" id="JQ1593">
    <property type="entry name" value="JQ1593"/>
</dbReference>
<dbReference type="RefSeq" id="NP_193821.1">
    <property type="nucleotide sequence ID" value="NM_118207.3"/>
</dbReference>
<dbReference type="SMR" id="P29517"/>
<dbReference type="BioGRID" id="13128">
    <property type="interactions" value="9"/>
</dbReference>
<dbReference type="FunCoup" id="P29517">
    <property type="interactions" value="2051"/>
</dbReference>
<dbReference type="IntAct" id="P29517">
    <property type="interactions" value="2"/>
</dbReference>
<dbReference type="MINT" id="P29517"/>
<dbReference type="STRING" id="3702.P29517"/>
<dbReference type="MetOSite" id="P29517"/>
<dbReference type="PaxDb" id="3702-AT4G20890.1"/>
<dbReference type="ProteomicsDB" id="234261"/>
<dbReference type="EnsemblPlants" id="AT4G20890.1">
    <property type="protein sequence ID" value="AT4G20890.1"/>
    <property type="gene ID" value="AT4G20890"/>
</dbReference>
<dbReference type="GeneID" id="827837"/>
<dbReference type="Gramene" id="AT4G20890.1">
    <property type="protein sequence ID" value="AT4G20890.1"/>
    <property type="gene ID" value="AT4G20890"/>
</dbReference>
<dbReference type="KEGG" id="ath:AT4G20890"/>
<dbReference type="Araport" id="AT4G20890"/>
<dbReference type="TAIR" id="AT4G20890">
    <property type="gene designation" value="TUB9"/>
</dbReference>
<dbReference type="eggNOG" id="KOG1375">
    <property type="taxonomic scope" value="Eukaryota"/>
</dbReference>
<dbReference type="HOGENOM" id="CLU_015718_1_1_1"/>
<dbReference type="InParanoid" id="P29517"/>
<dbReference type="OMA" id="CGETDLQ"/>
<dbReference type="OrthoDB" id="1040558at2759"/>
<dbReference type="PhylomeDB" id="P29517"/>
<dbReference type="PRO" id="PR:P29517"/>
<dbReference type="Proteomes" id="UP000006548">
    <property type="component" value="Chromosome 4"/>
</dbReference>
<dbReference type="ExpressionAtlas" id="P29517">
    <property type="expression patterns" value="baseline and differential"/>
</dbReference>
<dbReference type="GO" id="GO:0009507">
    <property type="term" value="C:chloroplast"/>
    <property type="evidence" value="ECO:0007005"/>
    <property type="project" value="TAIR"/>
</dbReference>
<dbReference type="GO" id="GO:0005829">
    <property type="term" value="C:cytosol"/>
    <property type="evidence" value="ECO:0007005"/>
    <property type="project" value="TAIR"/>
</dbReference>
<dbReference type="GO" id="GO:0005794">
    <property type="term" value="C:Golgi apparatus"/>
    <property type="evidence" value="ECO:0007005"/>
    <property type="project" value="TAIR"/>
</dbReference>
<dbReference type="GO" id="GO:0005874">
    <property type="term" value="C:microtubule"/>
    <property type="evidence" value="ECO:0007669"/>
    <property type="project" value="UniProtKB-KW"/>
</dbReference>
<dbReference type="GO" id="GO:0000325">
    <property type="term" value="C:plant-type vacuole"/>
    <property type="evidence" value="ECO:0007005"/>
    <property type="project" value="TAIR"/>
</dbReference>
<dbReference type="GO" id="GO:0005886">
    <property type="term" value="C:plasma membrane"/>
    <property type="evidence" value="ECO:0007005"/>
    <property type="project" value="TAIR"/>
</dbReference>
<dbReference type="GO" id="GO:0009506">
    <property type="term" value="C:plasmodesma"/>
    <property type="evidence" value="ECO:0007005"/>
    <property type="project" value="TAIR"/>
</dbReference>
<dbReference type="GO" id="GO:0045298">
    <property type="term" value="C:tubulin complex"/>
    <property type="evidence" value="ECO:0000250"/>
    <property type="project" value="TAIR"/>
</dbReference>
<dbReference type="GO" id="GO:0005525">
    <property type="term" value="F:GTP binding"/>
    <property type="evidence" value="ECO:0007669"/>
    <property type="project" value="UniProtKB-KW"/>
</dbReference>
<dbReference type="GO" id="GO:0003924">
    <property type="term" value="F:GTPase activity"/>
    <property type="evidence" value="ECO:0007669"/>
    <property type="project" value="InterPro"/>
</dbReference>
<dbReference type="GO" id="GO:0046872">
    <property type="term" value="F:metal ion binding"/>
    <property type="evidence" value="ECO:0007669"/>
    <property type="project" value="UniProtKB-KW"/>
</dbReference>
<dbReference type="GO" id="GO:0003729">
    <property type="term" value="F:mRNA binding"/>
    <property type="evidence" value="ECO:0000314"/>
    <property type="project" value="TAIR"/>
</dbReference>
<dbReference type="GO" id="GO:0005200">
    <property type="term" value="F:structural constituent of cytoskeleton"/>
    <property type="evidence" value="ECO:0007669"/>
    <property type="project" value="InterPro"/>
</dbReference>
<dbReference type="GO" id="GO:0007017">
    <property type="term" value="P:microtubule-based process"/>
    <property type="evidence" value="ECO:0007669"/>
    <property type="project" value="InterPro"/>
</dbReference>
<dbReference type="CDD" id="cd02187">
    <property type="entry name" value="beta_tubulin"/>
    <property type="match status" value="1"/>
</dbReference>
<dbReference type="FunFam" id="1.10.287.600:FF:000002">
    <property type="entry name" value="Tubulin beta chain"/>
    <property type="match status" value="1"/>
</dbReference>
<dbReference type="FunFam" id="3.30.1330.20:FF:000002">
    <property type="entry name" value="Tubulin beta chain"/>
    <property type="match status" value="1"/>
</dbReference>
<dbReference type="FunFam" id="3.40.50.1440:FF:000005">
    <property type="entry name" value="Tubulin beta chain"/>
    <property type="match status" value="1"/>
</dbReference>
<dbReference type="Gene3D" id="1.10.287.600">
    <property type="entry name" value="Helix hairpin bin"/>
    <property type="match status" value="1"/>
</dbReference>
<dbReference type="Gene3D" id="3.30.1330.20">
    <property type="entry name" value="Tubulin/FtsZ, C-terminal domain"/>
    <property type="match status" value="1"/>
</dbReference>
<dbReference type="Gene3D" id="3.40.50.1440">
    <property type="entry name" value="Tubulin/FtsZ, GTPase domain"/>
    <property type="match status" value="1"/>
</dbReference>
<dbReference type="InterPro" id="IPR013838">
    <property type="entry name" value="Beta-tubulin_BS"/>
</dbReference>
<dbReference type="InterPro" id="IPR002453">
    <property type="entry name" value="Beta_tubulin"/>
</dbReference>
<dbReference type="InterPro" id="IPR008280">
    <property type="entry name" value="Tub_FtsZ_C"/>
</dbReference>
<dbReference type="InterPro" id="IPR000217">
    <property type="entry name" value="Tubulin"/>
</dbReference>
<dbReference type="InterPro" id="IPR037103">
    <property type="entry name" value="Tubulin/FtsZ-like_C"/>
</dbReference>
<dbReference type="InterPro" id="IPR018316">
    <property type="entry name" value="Tubulin/FtsZ_2-layer-sand-dom"/>
</dbReference>
<dbReference type="InterPro" id="IPR036525">
    <property type="entry name" value="Tubulin/FtsZ_GTPase_sf"/>
</dbReference>
<dbReference type="InterPro" id="IPR023123">
    <property type="entry name" value="Tubulin_C"/>
</dbReference>
<dbReference type="InterPro" id="IPR017975">
    <property type="entry name" value="Tubulin_CS"/>
</dbReference>
<dbReference type="InterPro" id="IPR003008">
    <property type="entry name" value="Tubulin_FtsZ_GTPase"/>
</dbReference>
<dbReference type="PANTHER" id="PTHR11588">
    <property type="entry name" value="TUBULIN"/>
    <property type="match status" value="1"/>
</dbReference>
<dbReference type="Pfam" id="PF00091">
    <property type="entry name" value="Tubulin"/>
    <property type="match status" value="1"/>
</dbReference>
<dbReference type="Pfam" id="PF03953">
    <property type="entry name" value="Tubulin_C"/>
    <property type="match status" value="1"/>
</dbReference>
<dbReference type="PRINTS" id="PR01163">
    <property type="entry name" value="BETATUBULIN"/>
</dbReference>
<dbReference type="PRINTS" id="PR01161">
    <property type="entry name" value="TUBULIN"/>
</dbReference>
<dbReference type="SMART" id="SM00864">
    <property type="entry name" value="Tubulin"/>
    <property type="match status" value="1"/>
</dbReference>
<dbReference type="SMART" id="SM00865">
    <property type="entry name" value="Tubulin_C"/>
    <property type="match status" value="1"/>
</dbReference>
<dbReference type="SUPFAM" id="SSF55307">
    <property type="entry name" value="Tubulin C-terminal domain-like"/>
    <property type="match status" value="1"/>
</dbReference>
<dbReference type="SUPFAM" id="SSF52490">
    <property type="entry name" value="Tubulin nucleotide-binding domain-like"/>
    <property type="match status" value="1"/>
</dbReference>
<dbReference type="PROSITE" id="PS00227">
    <property type="entry name" value="TUBULIN"/>
    <property type="match status" value="1"/>
</dbReference>
<dbReference type="PROSITE" id="PS00228">
    <property type="entry name" value="TUBULIN_B_AUTOREG"/>
    <property type="match status" value="1"/>
</dbReference>
<gene>
    <name type="primary">TUBB9</name>
    <name type="synonym">TUB9</name>
    <name type="ordered locus">At4g20890</name>
    <name type="ORF">T13K14.50</name>
</gene>
<organism>
    <name type="scientific">Arabidopsis thaliana</name>
    <name type="common">Mouse-ear cress</name>
    <dbReference type="NCBI Taxonomy" id="3702"/>
    <lineage>
        <taxon>Eukaryota</taxon>
        <taxon>Viridiplantae</taxon>
        <taxon>Streptophyta</taxon>
        <taxon>Embryophyta</taxon>
        <taxon>Tracheophyta</taxon>
        <taxon>Spermatophyta</taxon>
        <taxon>Magnoliopsida</taxon>
        <taxon>eudicotyledons</taxon>
        <taxon>Gunneridae</taxon>
        <taxon>Pentapetalae</taxon>
        <taxon>rosids</taxon>
        <taxon>malvids</taxon>
        <taxon>Brassicales</taxon>
        <taxon>Brassicaceae</taxon>
        <taxon>Camelineae</taxon>
        <taxon>Arabidopsis</taxon>
    </lineage>
</organism>
<evidence type="ECO:0000250" key="1">
    <source>
        <dbReference type="UniProtKB" id="P68363"/>
    </source>
</evidence>
<evidence type="ECO:0000250" key="2">
    <source>
        <dbReference type="UniProtKB" id="Q13509"/>
    </source>
</evidence>
<evidence type="ECO:0000269" key="3">
    <source>
    </source>
</evidence>
<evidence type="ECO:0000305" key="4"/>
<protein>
    <recommendedName>
        <fullName>Tubulin beta-9 chain</fullName>
    </recommendedName>
    <alternativeName>
        <fullName>Beta-9-tubulin</fullName>
    </alternativeName>
</protein>
<feature type="chain" id="PRO_0000048328" description="Tubulin beta-9 chain">
    <location>
        <begin position="1"/>
        <end position="444"/>
    </location>
</feature>
<feature type="binding site" evidence="2">
    <location>
        <position position="11"/>
    </location>
    <ligand>
        <name>GTP</name>
        <dbReference type="ChEBI" id="CHEBI:37565"/>
    </ligand>
</feature>
<feature type="binding site" evidence="1">
    <location>
        <position position="69"/>
    </location>
    <ligand>
        <name>GTP</name>
        <dbReference type="ChEBI" id="CHEBI:37565"/>
    </ligand>
</feature>
<feature type="binding site" evidence="1">
    <location>
        <position position="69"/>
    </location>
    <ligand>
        <name>Mg(2+)</name>
        <dbReference type="ChEBI" id="CHEBI:18420"/>
    </ligand>
</feature>
<feature type="binding site" evidence="2">
    <location>
        <position position="138"/>
    </location>
    <ligand>
        <name>GTP</name>
        <dbReference type="ChEBI" id="CHEBI:37565"/>
    </ligand>
</feature>
<feature type="binding site" evidence="2">
    <location>
        <position position="142"/>
    </location>
    <ligand>
        <name>GTP</name>
        <dbReference type="ChEBI" id="CHEBI:37565"/>
    </ligand>
</feature>
<feature type="binding site" evidence="2">
    <location>
        <position position="143"/>
    </location>
    <ligand>
        <name>GTP</name>
        <dbReference type="ChEBI" id="CHEBI:37565"/>
    </ligand>
</feature>
<feature type="binding site" evidence="2">
    <location>
        <position position="144"/>
    </location>
    <ligand>
        <name>GTP</name>
        <dbReference type="ChEBI" id="CHEBI:37565"/>
    </ligand>
</feature>
<feature type="binding site" evidence="2">
    <location>
        <position position="204"/>
    </location>
    <ligand>
        <name>GTP</name>
        <dbReference type="ChEBI" id="CHEBI:37565"/>
    </ligand>
</feature>
<feature type="binding site" evidence="2">
    <location>
        <position position="226"/>
    </location>
    <ligand>
        <name>GTP</name>
        <dbReference type="ChEBI" id="CHEBI:37565"/>
    </ligand>
</feature>
<accession>P29517</accession>